<keyword id="KW-0002">3D-structure</keyword>
<keyword id="KW-0067">ATP-binding</keyword>
<keyword id="KW-0119">Carbohydrate metabolism</keyword>
<keyword id="KW-0963">Cytoplasm</keyword>
<keyword id="KW-0299">Galactose metabolism</keyword>
<keyword id="KW-0418">Kinase</keyword>
<keyword id="KW-0460">Magnesium</keyword>
<keyword id="KW-0479">Metal-binding</keyword>
<keyword id="KW-0547">Nucleotide-binding</keyword>
<keyword id="KW-0808">Transferase</keyword>
<organism>
    <name type="scientific">Pyrococcus horikoshii (strain ATCC 700860 / DSM 12428 / JCM 9974 / NBRC 100139 / OT-3)</name>
    <dbReference type="NCBI Taxonomy" id="70601"/>
    <lineage>
        <taxon>Archaea</taxon>
        <taxon>Methanobacteriati</taxon>
        <taxon>Methanobacteriota</taxon>
        <taxon>Thermococci</taxon>
        <taxon>Thermococcales</taxon>
        <taxon>Thermococcaceae</taxon>
        <taxon>Pyrococcus</taxon>
    </lineage>
</organism>
<reference key="1">
    <citation type="journal article" date="1998" name="DNA Res.">
        <title>Complete sequence and gene organization of the genome of a hyper-thermophilic archaebacterium, Pyrococcus horikoshii OT3.</title>
        <authorList>
            <person name="Kawarabayasi Y."/>
            <person name="Sawada M."/>
            <person name="Horikawa H."/>
            <person name="Haikawa Y."/>
            <person name="Hino Y."/>
            <person name="Yamamoto S."/>
            <person name="Sekine M."/>
            <person name="Baba S."/>
            <person name="Kosugi H."/>
            <person name="Hosoyama A."/>
            <person name="Nagai Y."/>
            <person name="Sakai M."/>
            <person name="Ogura K."/>
            <person name="Otsuka R."/>
            <person name="Nakazawa H."/>
            <person name="Takamiya M."/>
            <person name="Ohfuku Y."/>
            <person name="Funahashi T."/>
            <person name="Tanaka T."/>
            <person name="Kudoh Y."/>
            <person name="Yamazaki J."/>
            <person name="Kushida N."/>
            <person name="Oguchi A."/>
            <person name="Aoki K."/>
            <person name="Yoshizawa T."/>
            <person name="Nakamura Y."/>
            <person name="Robb F.T."/>
            <person name="Horikoshi K."/>
            <person name="Masuchi Y."/>
            <person name="Shizuya H."/>
            <person name="Kikuchi H."/>
        </authorList>
    </citation>
    <scope>NUCLEOTIDE SEQUENCE [LARGE SCALE GENOMIC DNA]</scope>
    <source>
        <strain>ATCC 700860 / DSM 12428 / JCM 9974 / NBRC 100139 / OT-3</strain>
    </source>
</reference>
<reference key="2">
    <citation type="journal article" date="2006" name="Acta Crystallogr. F">
        <title>Expression, purification, crystallization and preliminary X-ray diffraction analysis of galactokinase from Pyrococcus horikoshii.</title>
        <authorList>
            <person name="Inagaki E."/>
            <person name="Sakamoto K."/>
            <person name="Obayashi N."/>
            <person name="Terada T."/>
            <person name="Shirouzu M."/>
            <person name="Bessho Y."/>
            <person name="Kuroishi C."/>
            <person name="Kuramitsu S."/>
            <person name="Shinkai A."/>
            <person name="Yokoyama S."/>
        </authorList>
    </citation>
    <scope>FUNCTION</scope>
    <scope>CATALYTIC ACTIVITY</scope>
    <scope>KINETIC PARAMETERS</scope>
    <scope>CRYSTALLIZATION</scope>
    <source>
        <strain>ATCC 700860 / DSM 12428 / JCM 9974 / NBRC 100139 / OT-3</strain>
    </source>
</reference>
<reference key="3">
    <citation type="submission" date="2011-07" db="PDB data bank">
        <title>Crystal structure of galactokinase from Pyrococcus horikoshii.</title>
        <authorList>
            <consortium name="RIKEN structural genomics initiative (RSGI)"/>
        </authorList>
    </citation>
    <scope>X-RAY CRYSTALLOGRAPHY (1.50 ANGSTROMS) OF APOENZYME AND IN COMPLEXES WITH SUBSTRATE AND AN ATP ANALOG</scope>
</reference>
<name>GAL1_PYRHO</name>
<protein>
    <recommendedName>
        <fullName evidence="1">Galactokinase</fullName>
        <ecNumber evidence="1">2.7.1.6</ecNumber>
    </recommendedName>
    <alternativeName>
        <fullName evidence="1">Galactose kinase</fullName>
    </alternativeName>
</protein>
<feature type="chain" id="PRO_0000184642" description="Galactokinase">
    <location>
        <begin position="1"/>
        <end position="350"/>
    </location>
</feature>
<feature type="active site" description="Proton acceptor" evidence="3">
    <location>
        <position position="149"/>
    </location>
</feature>
<feature type="binding site">
    <location>
        <begin position="15"/>
        <end position="18"/>
    </location>
    <ligand>
        <name>substrate</name>
    </ligand>
</feature>
<feature type="binding site">
    <location>
        <position position="47"/>
    </location>
    <ligand>
        <name>ATP</name>
        <dbReference type="ChEBI" id="CHEBI:30616"/>
    </ligand>
</feature>
<feature type="binding site">
    <location>
        <begin position="99"/>
        <end position="105"/>
    </location>
    <ligand>
        <name>ATP</name>
        <dbReference type="ChEBI" id="CHEBI:30616"/>
    </ligand>
</feature>
<feature type="binding site" evidence="1">
    <location>
        <position position="105"/>
    </location>
    <ligand>
        <name>Mg(2+)</name>
        <dbReference type="ChEBI" id="CHEBI:18420"/>
    </ligand>
</feature>
<feature type="binding site" evidence="1">
    <location>
        <position position="137"/>
    </location>
    <ligand>
        <name>Mg(2+)</name>
        <dbReference type="ChEBI" id="CHEBI:18420"/>
    </ligand>
</feature>
<feature type="binding site">
    <location>
        <position position="198"/>
    </location>
    <ligand>
        <name>substrate</name>
    </ligand>
</feature>
<feature type="site" description="Transition state stabilizer" evidence="3">
    <location>
        <position position="9"/>
    </location>
</feature>
<feature type="strand" evidence="4">
    <location>
        <begin position="2"/>
        <end position="13"/>
    </location>
</feature>
<feature type="helix" evidence="4">
    <location>
        <begin position="18"/>
        <end position="20"/>
    </location>
</feature>
<feature type="strand" evidence="4">
    <location>
        <begin position="23"/>
        <end position="47"/>
    </location>
</feature>
<feature type="turn" evidence="4">
    <location>
        <begin position="48"/>
        <end position="51"/>
    </location>
</feature>
<feature type="strand" evidence="4">
    <location>
        <begin position="52"/>
        <end position="56"/>
    </location>
</feature>
<feature type="helix" evidence="4">
    <location>
        <begin position="68"/>
        <end position="80"/>
    </location>
</feature>
<feature type="strand" evidence="4">
    <location>
        <begin position="87"/>
        <end position="93"/>
    </location>
</feature>
<feature type="strand" evidence="4">
    <location>
        <begin position="100"/>
        <end position="102"/>
    </location>
</feature>
<feature type="helix" evidence="4">
    <location>
        <begin position="104"/>
        <end position="119"/>
    </location>
</feature>
<feature type="helix" evidence="4">
    <location>
        <begin position="126"/>
        <end position="139"/>
    </location>
</feature>
<feature type="helix" evidence="4">
    <location>
        <begin position="148"/>
        <end position="155"/>
    </location>
</feature>
<feature type="strand" evidence="4">
    <location>
        <begin position="160"/>
        <end position="165"/>
    </location>
</feature>
<feature type="turn" evidence="4">
    <location>
        <begin position="166"/>
        <end position="168"/>
    </location>
</feature>
<feature type="strand" evidence="4">
    <location>
        <begin position="171"/>
        <end position="175"/>
    </location>
</feature>
<feature type="strand" evidence="4">
    <location>
        <begin position="180"/>
        <end position="186"/>
    </location>
</feature>
<feature type="helix" evidence="5">
    <location>
        <begin position="191"/>
        <end position="194"/>
    </location>
</feature>
<feature type="helix" evidence="4">
    <location>
        <begin position="196"/>
        <end position="212"/>
    </location>
</feature>
<feature type="helix" evidence="4">
    <location>
        <begin position="217"/>
        <end position="219"/>
    </location>
</feature>
<feature type="helix" evidence="4">
    <location>
        <begin position="222"/>
        <end position="227"/>
    </location>
</feature>
<feature type="helix" evidence="4">
    <location>
        <begin position="230"/>
        <end position="254"/>
    </location>
</feature>
<feature type="helix" evidence="4">
    <location>
        <begin position="258"/>
        <end position="274"/>
    </location>
</feature>
<feature type="helix" evidence="4">
    <location>
        <begin position="281"/>
        <end position="292"/>
    </location>
</feature>
<feature type="strand" evidence="4">
    <location>
        <begin position="296"/>
        <end position="300"/>
    </location>
</feature>
<feature type="strand" evidence="4">
    <location>
        <begin position="305"/>
        <end position="314"/>
    </location>
</feature>
<feature type="helix" evidence="4">
    <location>
        <begin position="315"/>
        <end position="317"/>
    </location>
</feature>
<feature type="helix" evidence="4">
    <location>
        <begin position="318"/>
        <end position="332"/>
    </location>
</feature>
<feature type="strand" evidence="4">
    <location>
        <begin position="338"/>
        <end position="342"/>
    </location>
</feature>
<evidence type="ECO:0000255" key="1">
    <source>
        <dbReference type="HAMAP-Rule" id="MF_00246"/>
    </source>
</evidence>
<evidence type="ECO:0000269" key="2">
    <source>
    </source>
</evidence>
<evidence type="ECO:0000305" key="3"/>
<evidence type="ECO:0007829" key="4">
    <source>
        <dbReference type="PDB" id="2CZ9"/>
    </source>
</evidence>
<evidence type="ECO:0007829" key="5">
    <source>
        <dbReference type="PDB" id="2DEI"/>
    </source>
</evidence>
<accession>O58107</accession>
<gene>
    <name evidence="1" type="primary">galK</name>
    <name type="ordered locus">PH0369</name>
</gene>
<proteinExistence type="evidence at protein level"/>
<comment type="function">
    <text evidence="1 2">Catalyzes the transfer of the gamma-phosphate of ATP to D-galactose to form alpha-D-galactose-1-phosphate (Gal-1-P).</text>
</comment>
<comment type="catalytic activity">
    <reaction evidence="1 2">
        <text>alpha-D-galactose + ATP = alpha-D-galactose 1-phosphate + ADP + H(+)</text>
        <dbReference type="Rhea" id="RHEA:13553"/>
        <dbReference type="ChEBI" id="CHEBI:15378"/>
        <dbReference type="ChEBI" id="CHEBI:28061"/>
        <dbReference type="ChEBI" id="CHEBI:30616"/>
        <dbReference type="ChEBI" id="CHEBI:58336"/>
        <dbReference type="ChEBI" id="CHEBI:456216"/>
        <dbReference type="EC" id="2.7.1.6"/>
    </reaction>
</comment>
<comment type="biophysicochemical properties">
    <kinetics>
        <KM evidence="2">403 uM for D-galactose</KM>
        <KM evidence="2">132 uM for ATP</KM>
        <text>kcat is 0.91 sec(-1).</text>
    </kinetics>
</comment>
<comment type="pathway">
    <text evidence="1">Carbohydrate metabolism; galactose metabolism.</text>
</comment>
<comment type="subcellular location">
    <subcellularLocation>
        <location evidence="1">Cytoplasm</location>
    </subcellularLocation>
</comment>
<comment type="similarity">
    <text evidence="1">Belongs to the GHMP kinase family. GalK subfamily.</text>
</comment>
<sequence>MIKVKSPGRVNLIGEHTDYTYGYVMPMAINLYTKIEAEKHGEVILYSEHFGEERKFSLNDLRKENSWIDYVKGIFWVLKESDYEVGGIKGRVSGNLPLGAGLSSSASFEVGILETLDKLYNLKLDSLSKVLLAKKAENEFVGVPCGILDQFAVVFGREGNVIFLDTHTLDYEYIPFPKDVSILVFYTGVRRELASSEYAERKHIAEESLKILGKGSSKEVREGELSKLPPLHRKFFGYIVRENARVLEVRDALKEGNVEEVGKILTTAHWDLAKNYEVSCKELDFFVERALKLGAYGARLTGAGFGGSAIALVDKEDAETIGEEILREYLKRFPWKARHFIVEPSDGVGI</sequence>
<dbReference type="EC" id="2.7.1.6" evidence="1"/>
<dbReference type="EMBL" id="BA000001">
    <property type="protein sequence ID" value="BAA29443.1"/>
    <property type="molecule type" value="Genomic_DNA"/>
</dbReference>
<dbReference type="PIR" id="F71144">
    <property type="entry name" value="F71144"/>
</dbReference>
<dbReference type="RefSeq" id="WP_010884456.1">
    <property type="nucleotide sequence ID" value="NC_000961.1"/>
</dbReference>
<dbReference type="PDB" id="2CZ9">
    <property type="method" value="X-ray"/>
    <property type="resolution" value="1.50 A"/>
    <property type="chains" value="A=1-350"/>
</dbReference>
<dbReference type="PDB" id="2DEI">
    <property type="method" value="X-ray"/>
    <property type="resolution" value="1.70 A"/>
    <property type="chains" value="A=1-350"/>
</dbReference>
<dbReference type="PDB" id="2DEJ">
    <property type="method" value="X-ray"/>
    <property type="resolution" value="1.50 A"/>
    <property type="chains" value="A=1-350"/>
</dbReference>
<dbReference type="PDBsum" id="2CZ9"/>
<dbReference type="PDBsum" id="2DEI"/>
<dbReference type="PDBsum" id="2DEJ"/>
<dbReference type="SMR" id="O58107"/>
<dbReference type="STRING" id="70601.gene:9377288"/>
<dbReference type="EnsemblBacteria" id="BAA29443">
    <property type="protein sequence ID" value="BAA29443"/>
    <property type="gene ID" value="BAA29443"/>
</dbReference>
<dbReference type="GeneID" id="1444243"/>
<dbReference type="KEGG" id="pho:PH0369"/>
<dbReference type="eggNOG" id="arCOG01029">
    <property type="taxonomic scope" value="Archaea"/>
</dbReference>
<dbReference type="OrthoDB" id="116110at2157"/>
<dbReference type="UniPathway" id="UPA00214"/>
<dbReference type="EvolutionaryTrace" id="O58107"/>
<dbReference type="Proteomes" id="UP000000752">
    <property type="component" value="Chromosome"/>
</dbReference>
<dbReference type="GO" id="GO:0005829">
    <property type="term" value="C:cytosol"/>
    <property type="evidence" value="ECO:0007669"/>
    <property type="project" value="TreeGrafter"/>
</dbReference>
<dbReference type="GO" id="GO:0005524">
    <property type="term" value="F:ATP binding"/>
    <property type="evidence" value="ECO:0007669"/>
    <property type="project" value="UniProtKB-UniRule"/>
</dbReference>
<dbReference type="GO" id="GO:0004335">
    <property type="term" value="F:galactokinase activity"/>
    <property type="evidence" value="ECO:0007669"/>
    <property type="project" value="UniProtKB-UniRule"/>
</dbReference>
<dbReference type="GO" id="GO:0000287">
    <property type="term" value="F:magnesium ion binding"/>
    <property type="evidence" value="ECO:0007669"/>
    <property type="project" value="UniProtKB-UniRule"/>
</dbReference>
<dbReference type="GO" id="GO:0006012">
    <property type="term" value="P:galactose metabolic process"/>
    <property type="evidence" value="ECO:0007669"/>
    <property type="project" value="UniProtKB-UniRule"/>
</dbReference>
<dbReference type="FunFam" id="3.30.230.10:FF:000126">
    <property type="entry name" value="Galactokinase"/>
    <property type="match status" value="1"/>
</dbReference>
<dbReference type="FunFam" id="3.30.70.890:FF:000001">
    <property type="entry name" value="Galactokinase"/>
    <property type="match status" value="1"/>
</dbReference>
<dbReference type="Gene3D" id="3.30.230.10">
    <property type="match status" value="1"/>
</dbReference>
<dbReference type="Gene3D" id="3.30.70.890">
    <property type="entry name" value="GHMP kinase, C-terminal domain"/>
    <property type="match status" value="1"/>
</dbReference>
<dbReference type="HAMAP" id="MF_00246">
    <property type="entry name" value="Galactokinase"/>
    <property type="match status" value="1"/>
</dbReference>
<dbReference type="InterPro" id="IPR000705">
    <property type="entry name" value="Galactokinase"/>
</dbReference>
<dbReference type="InterPro" id="IPR022963">
    <property type="entry name" value="Galactokinase_bac"/>
</dbReference>
<dbReference type="InterPro" id="IPR019741">
    <property type="entry name" value="Galactokinase_CS"/>
</dbReference>
<dbReference type="InterPro" id="IPR019539">
    <property type="entry name" value="GalKase_N"/>
</dbReference>
<dbReference type="InterPro" id="IPR013750">
    <property type="entry name" value="GHMP_kinase_C_dom"/>
</dbReference>
<dbReference type="InterPro" id="IPR036554">
    <property type="entry name" value="GHMP_kinase_C_sf"/>
</dbReference>
<dbReference type="InterPro" id="IPR006204">
    <property type="entry name" value="GHMP_kinase_N_dom"/>
</dbReference>
<dbReference type="InterPro" id="IPR006203">
    <property type="entry name" value="GHMP_knse_ATP-bd_CS"/>
</dbReference>
<dbReference type="InterPro" id="IPR006206">
    <property type="entry name" value="Mevalonate/galactokinase"/>
</dbReference>
<dbReference type="InterPro" id="IPR020568">
    <property type="entry name" value="Ribosomal_Su5_D2-typ_SF"/>
</dbReference>
<dbReference type="InterPro" id="IPR014721">
    <property type="entry name" value="Ribsml_uS5_D2-typ_fold_subgr"/>
</dbReference>
<dbReference type="NCBIfam" id="TIGR00131">
    <property type="entry name" value="gal_kin"/>
    <property type="match status" value="1"/>
</dbReference>
<dbReference type="NCBIfam" id="NF003006">
    <property type="entry name" value="PRK03817.1"/>
    <property type="match status" value="1"/>
</dbReference>
<dbReference type="PANTHER" id="PTHR10457:SF7">
    <property type="entry name" value="GALACTOKINASE-RELATED"/>
    <property type="match status" value="1"/>
</dbReference>
<dbReference type="PANTHER" id="PTHR10457">
    <property type="entry name" value="MEVALONATE KINASE/GALACTOKINASE"/>
    <property type="match status" value="1"/>
</dbReference>
<dbReference type="Pfam" id="PF10509">
    <property type="entry name" value="GalKase_gal_bdg"/>
    <property type="match status" value="1"/>
</dbReference>
<dbReference type="Pfam" id="PF08544">
    <property type="entry name" value="GHMP_kinases_C"/>
    <property type="match status" value="1"/>
</dbReference>
<dbReference type="Pfam" id="PF00288">
    <property type="entry name" value="GHMP_kinases_N"/>
    <property type="match status" value="1"/>
</dbReference>
<dbReference type="PIRSF" id="PIRSF000530">
    <property type="entry name" value="Galactokinase"/>
    <property type="match status" value="1"/>
</dbReference>
<dbReference type="PRINTS" id="PR00473">
    <property type="entry name" value="GALCTOKINASE"/>
</dbReference>
<dbReference type="PRINTS" id="PR00959">
    <property type="entry name" value="MEVGALKINASE"/>
</dbReference>
<dbReference type="SUPFAM" id="SSF55060">
    <property type="entry name" value="GHMP Kinase, C-terminal domain"/>
    <property type="match status" value="1"/>
</dbReference>
<dbReference type="SUPFAM" id="SSF54211">
    <property type="entry name" value="Ribosomal protein S5 domain 2-like"/>
    <property type="match status" value="1"/>
</dbReference>
<dbReference type="PROSITE" id="PS00106">
    <property type="entry name" value="GALACTOKINASE"/>
    <property type="match status" value="1"/>
</dbReference>
<dbReference type="PROSITE" id="PS00627">
    <property type="entry name" value="GHMP_KINASES_ATP"/>
    <property type="match status" value="1"/>
</dbReference>